<feature type="initiator methionine" description="Removed" evidence="1">
    <location>
        <position position="1"/>
    </location>
</feature>
<feature type="chain" id="PRO_0000135388" description="Glutamine--fructose-6-phosphate aminotransferase [isomerizing]">
    <location>
        <begin position="2"/>
        <end position="604"/>
    </location>
</feature>
<feature type="domain" description="Glutamine amidotransferase type-2" evidence="1">
    <location>
        <begin position="2"/>
        <end position="218"/>
    </location>
</feature>
<feature type="domain" description="SIS 1" evidence="1">
    <location>
        <begin position="284"/>
        <end position="423"/>
    </location>
</feature>
<feature type="domain" description="SIS 2" evidence="1">
    <location>
        <begin position="456"/>
        <end position="594"/>
    </location>
</feature>
<feature type="active site" description="Nucleophile; for GATase activity" evidence="1">
    <location>
        <position position="2"/>
    </location>
</feature>
<feature type="active site" description="For Fru-6P isomerization activity" evidence="1">
    <location>
        <position position="599"/>
    </location>
</feature>
<dbReference type="EC" id="2.6.1.16" evidence="1"/>
<dbReference type="EMBL" id="AE009948">
    <property type="protein sequence ID" value="AAM99828.1"/>
    <property type="molecule type" value="Genomic_DNA"/>
</dbReference>
<dbReference type="RefSeq" id="NP_687956.1">
    <property type="nucleotide sequence ID" value="NC_004116.1"/>
</dbReference>
<dbReference type="RefSeq" id="WP_000334314.1">
    <property type="nucleotide sequence ID" value="NC_004116.1"/>
</dbReference>
<dbReference type="SMR" id="Q8DZZ7"/>
<dbReference type="STRING" id="208435.SAG0944"/>
<dbReference type="MEROPS" id="C44.A08"/>
<dbReference type="KEGG" id="sag:SAG0944"/>
<dbReference type="PATRIC" id="fig|208435.3.peg.949"/>
<dbReference type="HOGENOM" id="CLU_012520_7_1_9"/>
<dbReference type="OrthoDB" id="106547at2"/>
<dbReference type="Proteomes" id="UP000000821">
    <property type="component" value="Chromosome"/>
</dbReference>
<dbReference type="GO" id="GO:0005829">
    <property type="term" value="C:cytosol"/>
    <property type="evidence" value="ECO:0007669"/>
    <property type="project" value="TreeGrafter"/>
</dbReference>
<dbReference type="GO" id="GO:0097367">
    <property type="term" value="F:carbohydrate derivative binding"/>
    <property type="evidence" value="ECO:0007669"/>
    <property type="project" value="InterPro"/>
</dbReference>
<dbReference type="GO" id="GO:0004360">
    <property type="term" value="F:glutamine-fructose-6-phosphate transaminase (isomerizing) activity"/>
    <property type="evidence" value="ECO:0007669"/>
    <property type="project" value="UniProtKB-UniRule"/>
</dbReference>
<dbReference type="GO" id="GO:0005975">
    <property type="term" value="P:carbohydrate metabolic process"/>
    <property type="evidence" value="ECO:0007669"/>
    <property type="project" value="UniProtKB-UniRule"/>
</dbReference>
<dbReference type="GO" id="GO:0006002">
    <property type="term" value="P:fructose 6-phosphate metabolic process"/>
    <property type="evidence" value="ECO:0007669"/>
    <property type="project" value="TreeGrafter"/>
</dbReference>
<dbReference type="GO" id="GO:0006487">
    <property type="term" value="P:protein N-linked glycosylation"/>
    <property type="evidence" value="ECO:0007669"/>
    <property type="project" value="TreeGrafter"/>
</dbReference>
<dbReference type="GO" id="GO:0006047">
    <property type="term" value="P:UDP-N-acetylglucosamine metabolic process"/>
    <property type="evidence" value="ECO:0007669"/>
    <property type="project" value="TreeGrafter"/>
</dbReference>
<dbReference type="CDD" id="cd00714">
    <property type="entry name" value="GFAT"/>
    <property type="match status" value="1"/>
</dbReference>
<dbReference type="CDD" id="cd05008">
    <property type="entry name" value="SIS_GlmS_GlmD_1"/>
    <property type="match status" value="1"/>
</dbReference>
<dbReference type="CDD" id="cd05009">
    <property type="entry name" value="SIS_GlmS_GlmD_2"/>
    <property type="match status" value="1"/>
</dbReference>
<dbReference type="FunFam" id="3.40.50.10490:FF:000001">
    <property type="entry name" value="Glutamine--fructose-6-phosphate aminotransferase [isomerizing]"/>
    <property type="match status" value="1"/>
</dbReference>
<dbReference type="FunFam" id="3.40.50.10490:FF:000022">
    <property type="entry name" value="Glutamine--fructose-6-phosphate aminotransferase [isomerizing]"/>
    <property type="match status" value="1"/>
</dbReference>
<dbReference type="FunFam" id="3.60.20.10:FF:000006">
    <property type="entry name" value="Glutamine--fructose-6-phosphate aminotransferase [isomerizing]"/>
    <property type="match status" value="1"/>
</dbReference>
<dbReference type="Gene3D" id="3.40.50.10490">
    <property type="entry name" value="Glucose-6-phosphate isomerase like protein, domain 1"/>
    <property type="match status" value="2"/>
</dbReference>
<dbReference type="Gene3D" id="3.60.20.10">
    <property type="entry name" value="Glutamine Phosphoribosylpyrophosphate, subunit 1, domain 1"/>
    <property type="match status" value="1"/>
</dbReference>
<dbReference type="HAMAP" id="MF_00164">
    <property type="entry name" value="GlmS"/>
    <property type="match status" value="1"/>
</dbReference>
<dbReference type="InterPro" id="IPR017932">
    <property type="entry name" value="GATase_2_dom"/>
</dbReference>
<dbReference type="InterPro" id="IPR005855">
    <property type="entry name" value="GFAT"/>
</dbReference>
<dbReference type="InterPro" id="IPR047084">
    <property type="entry name" value="GFAT_N"/>
</dbReference>
<dbReference type="InterPro" id="IPR035466">
    <property type="entry name" value="GlmS/AgaS_SIS"/>
</dbReference>
<dbReference type="InterPro" id="IPR035490">
    <property type="entry name" value="GlmS/FrlB_SIS"/>
</dbReference>
<dbReference type="InterPro" id="IPR029055">
    <property type="entry name" value="Ntn_hydrolases_N"/>
</dbReference>
<dbReference type="InterPro" id="IPR001347">
    <property type="entry name" value="SIS_dom"/>
</dbReference>
<dbReference type="InterPro" id="IPR046348">
    <property type="entry name" value="SIS_dom_sf"/>
</dbReference>
<dbReference type="NCBIfam" id="TIGR01135">
    <property type="entry name" value="glmS"/>
    <property type="match status" value="1"/>
</dbReference>
<dbReference type="NCBIfam" id="NF001484">
    <property type="entry name" value="PRK00331.1"/>
    <property type="match status" value="1"/>
</dbReference>
<dbReference type="PANTHER" id="PTHR10937">
    <property type="entry name" value="GLUCOSAMINE--FRUCTOSE-6-PHOSPHATE AMINOTRANSFERASE, ISOMERIZING"/>
    <property type="match status" value="1"/>
</dbReference>
<dbReference type="PANTHER" id="PTHR10937:SF0">
    <property type="entry name" value="GLUTAMINE--FRUCTOSE-6-PHOSPHATE TRANSAMINASE (ISOMERIZING)"/>
    <property type="match status" value="1"/>
</dbReference>
<dbReference type="Pfam" id="PF13522">
    <property type="entry name" value="GATase_6"/>
    <property type="match status" value="1"/>
</dbReference>
<dbReference type="Pfam" id="PF01380">
    <property type="entry name" value="SIS"/>
    <property type="match status" value="2"/>
</dbReference>
<dbReference type="SUPFAM" id="SSF56235">
    <property type="entry name" value="N-terminal nucleophile aminohydrolases (Ntn hydrolases)"/>
    <property type="match status" value="1"/>
</dbReference>
<dbReference type="SUPFAM" id="SSF53697">
    <property type="entry name" value="SIS domain"/>
    <property type="match status" value="1"/>
</dbReference>
<dbReference type="PROSITE" id="PS51278">
    <property type="entry name" value="GATASE_TYPE_2"/>
    <property type="match status" value="1"/>
</dbReference>
<dbReference type="PROSITE" id="PS51464">
    <property type="entry name" value="SIS"/>
    <property type="match status" value="2"/>
</dbReference>
<proteinExistence type="inferred from homology"/>
<name>GLMS_STRA5</name>
<reference key="1">
    <citation type="journal article" date="2002" name="Proc. Natl. Acad. Sci. U.S.A.">
        <title>Complete genome sequence and comparative genomic analysis of an emerging human pathogen, serotype V Streptococcus agalactiae.</title>
        <authorList>
            <person name="Tettelin H."/>
            <person name="Masignani V."/>
            <person name="Cieslewicz M.J."/>
            <person name="Eisen J.A."/>
            <person name="Peterson S.N."/>
            <person name="Wessels M.R."/>
            <person name="Paulsen I.T."/>
            <person name="Nelson K.E."/>
            <person name="Margarit I."/>
            <person name="Read T.D."/>
            <person name="Madoff L.C."/>
            <person name="Wolf A.M."/>
            <person name="Beanan M.J."/>
            <person name="Brinkac L.M."/>
            <person name="Daugherty S.C."/>
            <person name="DeBoy R.T."/>
            <person name="Durkin A.S."/>
            <person name="Kolonay J.F."/>
            <person name="Madupu R."/>
            <person name="Lewis M.R."/>
            <person name="Radune D."/>
            <person name="Fedorova N.B."/>
            <person name="Scanlan D."/>
            <person name="Khouri H.M."/>
            <person name="Mulligan S."/>
            <person name="Carty H.A."/>
            <person name="Cline R.T."/>
            <person name="Van Aken S.E."/>
            <person name="Gill J."/>
            <person name="Scarselli M."/>
            <person name="Mora M."/>
            <person name="Iacobini E.T."/>
            <person name="Brettoni C."/>
            <person name="Galli G."/>
            <person name="Mariani M."/>
            <person name="Vegni F."/>
            <person name="Maione D."/>
            <person name="Rinaudo D."/>
            <person name="Rappuoli R."/>
            <person name="Telford J.L."/>
            <person name="Kasper D.L."/>
            <person name="Grandi G."/>
            <person name="Fraser C.M."/>
        </authorList>
    </citation>
    <scope>NUCLEOTIDE SEQUENCE [LARGE SCALE GENOMIC DNA]</scope>
    <source>
        <strain>ATCC BAA-611 / 2603 V/R</strain>
    </source>
</reference>
<evidence type="ECO:0000255" key="1">
    <source>
        <dbReference type="HAMAP-Rule" id="MF_00164"/>
    </source>
</evidence>
<keyword id="KW-0032">Aminotransferase</keyword>
<keyword id="KW-0963">Cytoplasm</keyword>
<keyword id="KW-0315">Glutamine amidotransferase</keyword>
<keyword id="KW-1185">Reference proteome</keyword>
<keyword id="KW-0677">Repeat</keyword>
<keyword id="KW-0808">Transferase</keyword>
<organism>
    <name type="scientific">Streptococcus agalactiae serotype V (strain ATCC BAA-611 / 2603 V/R)</name>
    <dbReference type="NCBI Taxonomy" id="208435"/>
    <lineage>
        <taxon>Bacteria</taxon>
        <taxon>Bacillati</taxon>
        <taxon>Bacillota</taxon>
        <taxon>Bacilli</taxon>
        <taxon>Lactobacillales</taxon>
        <taxon>Streptococcaceae</taxon>
        <taxon>Streptococcus</taxon>
    </lineage>
</organism>
<protein>
    <recommendedName>
        <fullName evidence="1">Glutamine--fructose-6-phosphate aminotransferase [isomerizing]</fullName>
        <ecNumber evidence="1">2.6.1.16</ecNumber>
    </recommendedName>
    <alternativeName>
        <fullName evidence="1">D-fructose-6-phosphate amidotransferase</fullName>
    </alternativeName>
    <alternativeName>
        <fullName evidence="1">GFAT</fullName>
    </alternativeName>
    <alternativeName>
        <fullName evidence="1">Glucosamine-6-phosphate synthase</fullName>
    </alternativeName>
    <alternativeName>
        <fullName evidence="1">Hexosephosphate aminotransferase</fullName>
    </alternativeName>
    <alternativeName>
        <fullName evidence="1">L-glutamine--D-fructose-6-phosphate amidotransferase</fullName>
    </alternativeName>
</protein>
<comment type="function">
    <text evidence="1">Catalyzes the first step in hexosamine metabolism, converting fructose-6P into glucosamine-6P using glutamine as a nitrogen source.</text>
</comment>
<comment type="catalytic activity">
    <reaction evidence="1">
        <text>D-fructose 6-phosphate + L-glutamine = D-glucosamine 6-phosphate + L-glutamate</text>
        <dbReference type="Rhea" id="RHEA:13237"/>
        <dbReference type="ChEBI" id="CHEBI:29985"/>
        <dbReference type="ChEBI" id="CHEBI:58359"/>
        <dbReference type="ChEBI" id="CHEBI:58725"/>
        <dbReference type="ChEBI" id="CHEBI:61527"/>
        <dbReference type="EC" id="2.6.1.16"/>
    </reaction>
</comment>
<comment type="subunit">
    <text evidence="1">Homodimer.</text>
</comment>
<comment type="subcellular location">
    <subcellularLocation>
        <location evidence="1">Cytoplasm</location>
    </subcellularLocation>
</comment>
<accession>Q8DZZ7</accession>
<sequence>MCGIVGVVGNTNATDILIQGLEKLEYRGYDSAGIFVVGDNKSQLVKSVGRIAEIQAKVGDSVSGTTGIGHTRWATHGKPTEGNAHPHTSGSGRFVLVHNGVIENYLQIKETYLTKHNLKGETDTEIAIHLVEHFVEEDNLSVLEAFKKALHIIEGSYAFALIDSQDADTIYVAKNKSPLLIGLGNGYNMVCSDAMAMIRETSEYMEIHDKELVIVKKDSVEVQDYDGNVIERGSYTAELDLSDIGKGTYPFYMLKEIDEQPTVMRKLISTYANESGDMNVDSDIIKSVQEADRLYILAAGTSYHAGFAAKTMIEKLTDTPVELGVSSEWGYNMPLLSKKPMFILLSQSGETADSRQVLVKANEMGIPSLTITNVPGSTLSREATYTMLIHAGPEIAVASTKAYTAQVATLAFLAKAVGEANGKAEAKDFDLVHELSIVAQSIEATLSEKDVISEKVEQLLISTRNAFYIGRGNDYYVTMEAALKLKEISYIQTEGFAAGELKHGTISLIEDNTPVIALISADSTIAAHTRGNIQEVVSRGANALIIVEEGLEREGDDIIVNKVHPFLSAISMVIPTQLIAYYASLQRGLDVDKPRNLAKAVTVE</sequence>
<gene>
    <name evidence="1" type="primary">glmS</name>
    <name type="ordered locus">SAG0944</name>
</gene>